<evidence type="ECO:0000255" key="1">
    <source>
        <dbReference type="HAMAP-Rule" id="MF_00185"/>
    </source>
</evidence>
<organism>
    <name type="scientific">Mesorhizobium japonicum (strain LMG 29417 / CECT 9101 / MAFF 303099)</name>
    <name type="common">Mesorhizobium loti (strain MAFF 303099)</name>
    <dbReference type="NCBI Taxonomy" id="266835"/>
    <lineage>
        <taxon>Bacteria</taxon>
        <taxon>Pseudomonadati</taxon>
        <taxon>Pseudomonadota</taxon>
        <taxon>Alphaproteobacteria</taxon>
        <taxon>Hyphomicrobiales</taxon>
        <taxon>Phyllobacteriaceae</taxon>
        <taxon>Mesorhizobium</taxon>
    </lineage>
</organism>
<dbReference type="EC" id="2.5.1.75" evidence="1"/>
<dbReference type="EMBL" id="BA000012">
    <property type="protein sequence ID" value="BAB48820.1"/>
    <property type="molecule type" value="Genomic_DNA"/>
</dbReference>
<dbReference type="RefSeq" id="WP_010910173.1">
    <property type="nucleotide sequence ID" value="NC_002678.2"/>
</dbReference>
<dbReference type="SMR" id="Q98KJ4"/>
<dbReference type="KEGG" id="mlo:mll1448"/>
<dbReference type="PATRIC" id="fig|266835.9.peg.1168"/>
<dbReference type="eggNOG" id="COG0324">
    <property type="taxonomic scope" value="Bacteria"/>
</dbReference>
<dbReference type="HOGENOM" id="CLU_032616_0_1_5"/>
<dbReference type="Proteomes" id="UP000000552">
    <property type="component" value="Chromosome"/>
</dbReference>
<dbReference type="GO" id="GO:0005524">
    <property type="term" value="F:ATP binding"/>
    <property type="evidence" value="ECO:0007669"/>
    <property type="project" value="UniProtKB-UniRule"/>
</dbReference>
<dbReference type="GO" id="GO:0052381">
    <property type="term" value="F:tRNA dimethylallyltransferase activity"/>
    <property type="evidence" value="ECO:0007669"/>
    <property type="project" value="UniProtKB-UniRule"/>
</dbReference>
<dbReference type="GO" id="GO:0006400">
    <property type="term" value="P:tRNA modification"/>
    <property type="evidence" value="ECO:0007669"/>
    <property type="project" value="TreeGrafter"/>
</dbReference>
<dbReference type="CDD" id="cd02019">
    <property type="entry name" value="NK"/>
    <property type="match status" value="1"/>
</dbReference>
<dbReference type="Gene3D" id="1.10.20.140">
    <property type="match status" value="1"/>
</dbReference>
<dbReference type="Gene3D" id="3.40.50.300">
    <property type="entry name" value="P-loop containing nucleotide triphosphate hydrolases"/>
    <property type="match status" value="1"/>
</dbReference>
<dbReference type="HAMAP" id="MF_00185">
    <property type="entry name" value="IPP_trans"/>
    <property type="match status" value="1"/>
</dbReference>
<dbReference type="InterPro" id="IPR039657">
    <property type="entry name" value="Dimethylallyltransferase"/>
</dbReference>
<dbReference type="InterPro" id="IPR018022">
    <property type="entry name" value="IPT"/>
</dbReference>
<dbReference type="InterPro" id="IPR027417">
    <property type="entry name" value="P-loop_NTPase"/>
</dbReference>
<dbReference type="NCBIfam" id="TIGR00174">
    <property type="entry name" value="miaA"/>
    <property type="match status" value="1"/>
</dbReference>
<dbReference type="PANTHER" id="PTHR11088">
    <property type="entry name" value="TRNA DIMETHYLALLYLTRANSFERASE"/>
    <property type="match status" value="1"/>
</dbReference>
<dbReference type="PANTHER" id="PTHR11088:SF60">
    <property type="entry name" value="TRNA DIMETHYLALLYLTRANSFERASE"/>
    <property type="match status" value="1"/>
</dbReference>
<dbReference type="Pfam" id="PF01715">
    <property type="entry name" value="IPPT"/>
    <property type="match status" value="1"/>
</dbReference>
<dbReference type="SUPFAM" id="SSF52540">
    <property type="entry name" value="P-loop containing nucleoside triphosphate hydrolases"/>
    <property type="match status" value="1"/>
</dbReference>
<comment type="function">
    <text evidence="1">Catalyzes the transfer of a dimethylallyl group onto the adenine at position 37 in tRNAs that read codons beginning with uridine, leading to the formation of N6-(dimethylallyl)adenosine (i(6)A).</text>
</comment>
<comment type="catalytic activity">
    <reaction evidence="1">
        <text>adenosine(37) in tRNA + dimethylallyl diphosphate = N(6)-dimethylallyladenosine(37) in tRNA + diphosphate</text>
        <dbReference type="Rhea" id="RHEA:26482"/>
        <dbReference type="Rhea" id="RHEA-COMP:10162"/>
        <dbReference type="Rhea" id="RHEA-COMP:10375"/>
        <dbReference type="ChEBI" id="CHEBI:33019"/>
        <dbReference type="ChEBI" id="CHEBI:57623"/>
        <dbReference type="ChEBI" id="CHEBI:74411"/>
        <dbReference type="ChEBI" id="CHEBI:74415"/>
        <dbReference type="EC" id="2.5.1.75"/>
    </reaction>
</comment>
<comment type="cofactor">
    <cofactor evidence="1">
        <name>Mg(2+)</name>
        <dbReference type="ChEBI" id="CHEBI:18420"/>
    </cofactor>
</comment>
<comment type="subunit">
    <text evidence="1">Monomer.</text>
</comment>
<comment type="similarity">
    <text evidence="1">Belongs to the IPP transferase family.</text>
</comment>
<proteinExistence type="inferred from homology"/>
<protein>
    <recommendedName>
        <fullName evidence="1">tRNA dimethylallyltransferase</fullName>
        <ecNumber evidence="1">2.5.1.75</ecNumber>
    </recommendedName>
    <alternativeName>
        <fullName evidence="1">Dimethylallyl diphosphate:tRNA dimethylallyltransferase</fullName>
        <shortName evidence="1">DMAPP:tRNA dimethylallyltransferase</shortName>
        <shortName evidence="1">DMATase</shortName>
    </alternativeName>
    <alternativeName>
        <fullName evidence="1">Isopentenyl-diphosphate:tRNA isopentenyltransferase</fullName>
        <shortName evidence="1">IPP transferase</shortName>
        <shortName evidence="1">IPPT</shortName>
        <shortName evidence="1">IPTase</shortName>
    </alternativeName>
</protein>
<name>MIAA_RHILO</name>
<accession>Q98KJ4</accession>
<reference key="1">
    <citation type="journal article" date="2000" name="DNA Res.">
        <title>Complete genome structure of the nitrogen-fixing symbiotic bacterium Mesorhizobium loti.</title>
        <authorList>
            <person name="Kaneko T."/>
            <person name="Nakamura Y."/>
            <person name="Sato S."/>
            <person name="Asamizu E."/>
            <person name="Kato T."/>
            <person name="Sasamoto S."/>
            <person name="Watanabe A."/>
            <person name="Idesawa K."/>
            <person name="Ishikawa A."/>
            <person name="Kawashima K."/>
            <person name="Kimura T."/>
            <person name="Kishida Y."/>
            <person name="Kiyokawa C."/>
            <person name="Kohara M."/>
            <person name="Matsumoto M."/>
            <person name="Matsuno A."/>
            <person name="Mochizuki Y."/>
            <person name="Nakayama S."/>
            <person name="Nakazaki N."/>
            <person name="Shimpo S."/>
            <person name="Sugimoto M."/>
            <person name="Takeuchi C."/>
            <person name="Yamada M."/>
            <person name="Tabata S."/>
        </authorList>
    </citation>
    <scope>NUCLEOTIDE SEQUENCE [LARGE SCALE GENOMIC DNA]</scope>
    <source>
        <strain>LMG 29417 / CECT 9101 / MAFF 303099</strain>
    </source>
</reference>
<sequence length="321" mass="35411">MSGIENSGADAGEGRVKNAILIAGPTASGKSALALDLAERAGGVIVNSDSMQGYSVLDVLTARPEAADLARVPHFLYGHVHPGTAYSTGAWLRDVMKLIDDGMLSRRPVFVGGTGLYFRALAEGISEMPDIPPRIRDRWRYELKEQGAVKLHGLLLREDSRAAMQLKPTDSQRIVRALEVLDASGRSILEWQAERGRPLIDRQTARFLVIEPDRAALVDRIERRFDQMLDKGALEEVRQLAALGLDPDLPAMKAIGVRDLQAAMAGQLSFPEAIERAKIATRQYAKRQATWFRHQLGPEWQRLRPGDDLETTMQTLVANAT</sequence>
<feature type="chain" id="PRO_0000163961" description="tRNA dimethylallyltransferase">
    <location>
        <begin position="1"/>
        <end position="321"/>
    </location>
</feature>
<feature type="region of interest" description="Interaction with substrate tRNA" evidence="1">
    <location>
        <begin position="49"/>
        <end position="52"/>
    </location>
</feature>
<feature type="region of interest" description="Interaction with substrate tRNA" evidence="1">
    <location>
        <begin position="172"/>
        <end position="176"/>
    </location>
</feature>
<feature type="binding site" evidence="1">
    <location>
        <begin position="24"/>
        <end position="31"/>
    </location>
    <ligand>
        <name>ATP</name>
        <dbReference type="ChEBI" id="CHEBI:30616"/>
    </ligand>
</feature>
<feature type="binding site" evidence="1">
    <location>
        <begin position="26"/>
        <end position="31"/>
    </location>
    <ligand>
        <name>substrate</name>
    </ligand>
</feature>
<feature type="site" description="Interaction with substrate tRNA" evidence="1">
    <location>
        <position position="114"/>
    </location>
</feature>
<feature type="site" description="Interaction with substrate tRNA" evidence="1">
    <location>
        <position position="136"/>
    </location>
</feature>
<keyword id="KW-0067">ATP-binding</keyword>
<keyword id="KW-0460">Magnesium</keyword>
<keyword id="KW-0547">Nucleotide-binding</keyword>
<keyword id="KW-0808">Transferase</keyword>
<keyword id="KW-0819">tRNA processing</keyword>
<gene>
    <name evidence="1" type="primary">miaA</name>
    <name type="ordered locus">mll1448</name>
</gene>